<gene>
    <name evidence="1" type="primary">dtd</name>
    <name type="synonym">yrvI</name>
    <name type="ordered locus">BSU27590</name>
</gene>
<protein>
    <recommendedName>
        <fullName>Inactive D-aminoacyl-tRNA deacylase</fullName>
    </recommendedName>
</protein>
<organism>
    <name type="scientific">Bacillus subtilis (strain 168)</name>
    <dbReference type="NCBI Taxonomy" id="224308"/>
    <lineage>
        <taxon>Bacteria</taxon>
        <taxon>Bacillati</taxon>
        <taxon>Bacillota</taxon>
        <taxon>Bacilli</taxon>
        <taxon>Bacillales</taxon>
        <taxon>Bacillaceae</taxon>
        <taxon>Bacillus</taxon>
    </lineage>
</organism>
<proteinExistence type="uncertain"/>
<reference key="1">
    <citation type="journal article" date="1997" name="Nature">
        <title>The complete genome sequence of the Gram-positive bacterium Bacillus subtilis.</title>
        <authorList>
            <person name="Kunst F."/>
            <person name="Ogasawara N."/>
            <person name="Moszer I."/>
            <person name="Albertini A.M."/>
            <person name="Alloni G."/>
            <person name="Azevedo V."/>
            <person name="Bertero M.G."/>
            <person name="Bessieres P."/>
            <person name="Bolotin A."/>
            <person name="Borchert S."/>
            <person name="Borriss R."/>
            <person name="Boursier L."/>
            <person name="Brans A."/>
            <person name="Braun M."/>
            <person name="Brignell S.C."/>
            <person name="Bron S."/>
            <person name="Brouillet S."/>
            <person name="Bruschi C.V."/>
            <person name="Caldwell B."/>
            <person name="Capuano V."/>
            <person name="Carter N.M."/>
            <person name="Choi S.-K."/>
            <person name="Codani J.-J."/>
            <person name="Connerton I.F."/>
            <person name="Cummings N.J."/>
            <person name="Daniel R.A."/>
            <person name="Denizot F."/>
            <person name="Devine K.M."/>
            <person name="Duesterhoeft A."/>
            <person name="Ehrlich S.D."/>
            <person name="Emmerson P.T."/>
            <person name="Entian K.-D."/>
            <person name="Errington J."/>
            <person name="Fabret C."/>
            <person name="Ferrari E."/>
            <person name="Foulger D."/>
            <person name="Fritz C."/>
            <person name="Fujita M."/>
            <person name="Fujita Y."/>
            <person name="Fuma S."/>
            <person name="Galizzi A."/>
            <person name="Galleron N."/>
            <person name="Ghim S.-Y."/>
            <person name="Glaser P."/>
            <person name="Goffeau A."/>
            <person name="Golightly E.J."/>
            <person name="Grandi G."/>
            <person name="Guiseppi G."/>
            <person name="Guy B.J."/>
            <person name="Haga K."/>
            <person name="Haiech J."/>
            <person name="Harwood C.R."/>
            <person name="Henaut A."/>
            <person name="Hilbert H."/>
            <person name="Holsappel S."/>
            <person name="Hosono S."/>
            <person name="Hullo M.-F."/>
            <person name="Itaya M."/>
            <person name="Jones L.-M."/>
            <person name="Joris B."/>
            <person name="Karamata D."/>
            <person name="Kasahara Y."/>
            <person name="Klaerr-Blanchard M."/>
            <person name="Klein C."/>
            <person name="Kobayashi Y."/>
            <person name="Koetter P."/>
            <person name="Koningstein G."/>
            <person name="Krogh S."/>
            <person name="Kumano M."/>
            <person name="Kurita K."/>
            <person name="Lapidus A."/>
            <person name="Lardinois S."/>
            <person name="Lauber J."/>
            <person name="Lazarevic V."/>
            <person name="Lee S.-M."/>
            <person name="Levine A."/>
            <person name="Liu H."/>
            <person name="Masuda S."/>
            <person name="Mauel C."/>
            <person name="Medigue C."/>
            <person name="Medina N."/>
            <person name="Mellado R.P."/>
            <person name="Mizuno M."/>
            <person name="Moestl D."/>
            <person name="Nakai S."/>
            <person name="Noback M."/>
            <person name="Noone D."/>
            <person name="O'Reilly M."/>
            <person name="Ogawa K."/>
            <person name="Ogiwara A."/>
            <person name="Oudega B."/>
            <person name="Park S.-H."/>
            <person name="Parro V."/>
            <person name="Pohl T.M."/>
            <person name="Portetelle D."/>
            <person name="Porwollik S."/>
            <person name="Prescott A.M."/>
            <person name="Presecan E."/>
            <person name="Pujic P."/>
            <person name="Purnelle B."/>
            <person name="Rapoport G."/>
            <person name="Rey M."/>
            <person name="Reynolds S."/>
            <person name="Rieger M."/>
            <person name="Rivolta C."/>
            <person name="Rocha E."/>
            <person name="Roche B."/>
            <person name="Rose M."/>
            <person name="Sadaie Y."/>
            <person name="Sato T."/>
            <person name="Scanlan E."/>
            <person name="Schleich S."/>
            <person name="Schroeter R."/>
            <person name="Scoffone F."/>
            <person name="Sekiguchi J."/>
            <person name="Sekowska A."/>
            <person name="Seror S.J."/>
            <person name="Serror P."/>
            <person name="Shin B.-S."/>
            <person name="Soldo B."/>
            <person name="Sorokin A."/>
            <person name="Tacconi E."/>
            <person name="Takagi T."/>
            <person name="Takahashi H."/>
            <person name="Takemaru K."/>
            <person name="Takeuchi M."/>
            <person name="Tamakoshi A."/>
            <person name="Tanaka T."/>
            <person name="Terpstra P."/>
            <person name="Tognoni A."/>
            <person name="Tosato V."/>
            <person name="Uchiyama S."/>
            <person name="Vandenbol M."/>
            <person name="Vannier F."/>
            <person name="Vassarotti A."/>
            <person name="Viari A."/>
            <person name="Wambutt R."/>
            <person name="Wedler E."/>
            <person name="Wedler H."/>
            <person name="Weitzenegger T."/>
            <person name="Winters P."/>
            <person name="Wipat A."/>
            <person name="Yamamoto H."/>
            <person name="Yamane K."/>
            <person name="Yasumoto K."/>
            <person name="Yata K."/>
            <person name="Yoshida K."/>
            <person name="Yoshikawa H.-F."/>
            <person name="Zumstein E."/>
            <person name="Yoshikawa H."/>
            <person name="Danchin A."/>
        </authorList>
    </citation>
    <scope>NUCLEOTIDE SEQUENCE [LARGE SCALE GENOMIC DNA]</scope>
    <source>
        <strain>168</strain>
    </source>
</reference>
<reference key="2">
    <citation type="journal article" date="1967" name="J. Mol. Biol.">
        <title>D-tyrosyl RNA: formation, hydrolysis and utilization for protein synthesis.</title>
        <authorList>
            <person name="Calendar R."/>
            <person name="Berg P."/>
        </authorList>
    </citation>
    <scope>LACK OF DTD ACTIVITY</scope>
    <source>
        <strain>SB19</strain>
    </source>
</reference>
<reference key="3">
    <citation type="journal article" date="2013" name="J. Bacteriol.">
        <title>D-amino acids indirectly inhibit biofilm formation in Bacillus subtilis by interfering with protein synthesis.</title>
        <authorList>
            <person name="Leiman S.A."/>
            <person name="May J.M."/>
            <person name="Lebar M.D."/>
            <person name="Kahne D."/>
            <person name="Kolter R."/>
            <person name="Losick R."/>
        </authorList>
    </citation>
    <scope>LACK OF DTD ACTIVITY</scope>
    <scope>RESTORATION OF ACTIVITY</scope>
    <source>
        <strain>168</strain>
        <strain>168 / Marburg / ATCC 6051 / DSM 10 / JCM 1465 / NBRC 13719 / NCIMB 3610 / NRRL NRS-744 / VKM B-501</strain>
    </source>
</reference>
<reference key="4">
    <citation type="journal article" date="2015" name="Microbiol. Res.">
        <title>The dtd gene from Bacillus amyloliquefaciens encodes a putative D-tyrosyl-tRNATyr deacylase and is a selectable marker for Bacillus subtilis.</title>
        <authorList>
            <person name="Geraskina N.V."/>
            <person name="Butov I.A."/>
            <person name="Yomantas Y.A."/>
            <person name="Stoynova N.V."/>
        </authorList>
    </citation>
    <scope>LACK OF DTD ACTIVITY</scope>
    <scope>BIOTECHNOLOGY</scope>
    <source>
        <strain>168</strain>
    </source>
</reference>
<sequence length="132" mass="14487">MDEEVVGQIGQGLMVLVGITHDDTEDDAAYLADKVVNLRIFDDSEGKMNLSLVDIGGEILSVSQFTLYGDTKKGRRPNYMNAAKPDKALGLYEKWNDLLREKGIKVETGTFGAMMDVQLTNSGPVTLIMDSK</sequence>
<feature type="chain" id="PRO_0000164625" description="Inactive D-aminoacyl-tRNA deacylase">
    <location>
        <begin position="1"/>
        <end position="132"/>
    </location>
</feature>
<comment type="function">
    <text evidence="2 3 4">A non-functional D-aminoacyl-tRNA deacylase (PubMed:24097941, PubMed:25441601, PubMed:4292198).</text>
</comment>
<comment type="biotechnology">
    <text evidence="3">The dtd gene from B.amyloliquefaciens strain A50 confers the ability to grow in the presence of 20 mg/ml D-Tyr and 500 mg/ml D-Asp to B.subtilis, showing it can be used as a selective marker in bacteria that do not have a functional copy of this gene. Spontaneous resistance to D-Tyr is very rare, on the order of 10(-9) (PubMed:25441601).</text>
</comment>
<comment type="miscellaneous">
    <text evidence="2 3">Culture in the presence of D-Leu, D-Met, D-Trp or D-Tyr leads to growth inhibition due to their incorporation into protein, as well as inhibition of biofilm formation (PubMed:24097941). Partially contradictory results are seen in another study where growth occurs in the presence of 20 and 500 mg/ml D-Trp but not in 500 mg/ml D-Asp or D-Ser; whether these are the exact same strains is unknown (PubMed:25441601). Strains in which this gene is restored by mutagenesis are resistant to D-Leu, D-Met, D-Trp and D-Tyr and form biofilm even in the presence of D-amino acids, while maintaining the ability to incorporate at least D-Trp into peptidoglycan (PubMed:24097941).</text>
</comment>
<comment type="similarity">
    <text evidence="1">Belongs to the DTD family.</text>
</comment>
<comment type="caution">
    <text evidence="2 3 4">Could be the product of a pseudogene. The lack of an initiation codon prevents translation of this gene, in agreement with the observation that D-Tyr-tRNA(Tyr) deacylase activity cannot be detected in some strains of B.subtilis (PubMed:24097941, PubMed:25441601, PubMed:4292198). Mutagenesis to restore the start codon (in strain NCIB 3610, the parent of the fully sequenced 168) confers resistance to D-Tyr (PubMed:24097941).</text>
</comment>
<name>DTD_BACSU</name>
<evidence type="ECO:0000255" key="1">
    <source>
        <dbReference type="HAMAP-Rule" id="MF_00518"/>
    </source>
</evidence>
<evidence type="ECO:0000269" key="2">
    <source>
    </source>
</evidence>
<evidence type="ECO:0000269" key="3">
    <source>
    </source>
</evidence>
<evidence type="ECO:0000305" key="4">
    <source>
    </source>
</evidence>
<accession>O32042</accession>
<keyword id="KW-1185">Reference proteome</keyword>
<dbReference type="EMBL" id="AL009126">
    <property type="protein sequence ID" value="CAB14718.2"/>
    <property type="molecule type" value="Genomic_DNA"/>
</dbReference>
<dbReference type="PIR" id="A69981">
    <property type="entry name" value="A69981"/>
</dbReference>
<dbReference type="RefSeq" id="NP_390637.2">
    <property type="nucleotide sequence ID" value="NC_000964.3"/>
</dbReference>
<dbReference type="RefSeq" id="WP_003229749.1">
    <property type="nucleotide sequence ID" value="NZ_OZ025638.1"/>
</dbReference>
<dbReference type="SMR" id="O32042"/>
<dbReference type="FunCoup" id="O32042">
    <property type="interactions" value="532"/>
</dbReference>
<dbReference type="STRING" id="224308.BSU27590"/>
<dbReference type="PaxDb" id="224308-BSU27590"/>
<dbReference type="EnsemblBacteria" id="CAB14718">
    <property type="protein sequence ID" value="CAB14718"/>
    <property type="gene ID" value="BSU_27590"/>
</dbReference>
<dbReference type="GeneID" id="936530"/>
<dbReference type="KEGG" id="bsu:BSU27590"/>
<dbReference type="PATRIC" id="fig|224308.43.peg.2880"/>
<dbReference type="eggNOG" id="COG1490">
    <property type="taxonomic scope" value="Bacteria"/>
</dbReference>
<dbReference type="InParanoid" id="O32042"/>
<dbReference type="OrthoDB" id="9801395at2"/>
<dbReference type="BioCyc" id="BSUB:BSU27590-MONOMER"/>
<dbReference type="Proteomes" id="UP000001570">
    <property type="component" value="Chromosome"/>
</dbReference>
<dbReference type="GO" id="GO:0005737">
    <property type="term" value="C:cytoplasm"/>
    <property type="evidence" value="ECO:0000318"/>
    <property type="project" value="GO_Central"/>
</dbReference>
<dbReference type="GO" id="GO:0051500">
    <property type="term" value="F:D-tyrosyl-tRNA(Tyr) deacylase activity"/>
    <property type="evidence" value="ECO:0000318"/>
    <property type="project" value="GO_Central"/>
</dbReference>
<dbReference type="GO" id="GO:0106026">
    <property type="term" value="F:Gly-tRNA(Ala) deacylase activity"/>
    <property type="evidence" value="ECO:0007669"/>
    <property type="project" value="UniProtKB-UniRule"/>
</dbReference>
<dbReference type="GO" id="GO:0043908">
    <property type="term" value="F:Ser(Gly)-tRNA(Ala) hydrolase activity"/>
    <property type="evidence" value="ECO:0007669"/>
    <property type="project" value="UniProtKB-UniRule"/>
</dbReference>
<dbReference type="GO" id="GO:0000049">
    <property type="term" value="F:tRNA binding"/>
    <property type="evidence" value="ECO:0007669"/>
    <property type="project" value="UniProtKB-UniRule"/>
</dbReference>
<dbReference type="GO" id="GO:0019478">
    <property type="term" value="P:D-amino acid catabolic process"/>
    <property type="evidence" value="ECO:0007669"/>
    <property type="project" value="UniProtKB-UniRule"/>
</dbReference>
<dbReference type="GO" id="GO:0006399">
    <property type="term" value="P:tRNA metabolic process"/>
    <property type="evidence" value="ECO:0000318"/>
    <property type="project" value="GO_Central"/>
</dbReference>
<dbReference type="CDD" id="cd00563">
    <property type="entry name" value="Dtyr_deacylase"/>
    <property type="match status" value="1"/>
</dbReference>
<dbReference type="FunFam" id="3.50.80.10:FF:000001">
    <property type="entry name" value="D-aminoacyl-tRNA deacylase"/>
    <property type="match status" value="1"/>
</dbReference>
<dbReference type="Gene3D" id="3.50.80.10">
    <property type="entry name" value="D-tyrosyl-tRNA(Tyr) deacylase"/>
    <property type="match status" value="1"/>
</dbReference>
<dbReference type="HAMAP" id="MF_00518">
    <property type="entry name" value="Deacylase_Dtd"/>
    <property type="match status" value="1"/>
</dbReference>
<dbReference type="InterPro" id="IPR003732">
    <property type="entry name" value="Daa-tRNA_deacyls_DTD"/>
</dbReference>
<dbReference type="InterPro" id="IPR023509">
    <property type="entry name" value="DTD-like_sf"/>
</dbReference>
<dbReference type="NCBIfam" id="TIGR00256">
    <property type="entry name" value="D-aminoacyl-tRNA deacylase"/>
    <property type="match status" value="1"/>
</dbReference>
<dbReference type="PANTHER" id="PTHR10472:SF5">
    <property type="entry name" value="D-AMINOACYL-TRNA DEACYLASE 1"/>
    <property type="match status" value="1"/>
</dbReference>
<dbReference type="PANTHER" id="PTHR10472">
    <property type="entry name" value="D-TYROSYL-TRNA TYR DEACYLASE"/>
    <property type="match status" value="1"/>
</dbReference>
<dbReference type="Pfam" id="PF02580">
    <property type="entry name" value="Tyr_Deacylase"/>
    <property type="match status" value="1"/>
</dbReference>
<dbReference type="SUPFAM" id="SSF69500">
    <property type="entry name" value="DTD-like"/>
    <property type="match status" value="1"/>
</dbReference>